<name>AROC_CAPSE</name>
<feature type="transit peptide" description="Chloroplast" evidence="1">
    <location>
        <begin position="1"/>
        <end position="57"/>
    </location>
</feature>
<feature type="chain" id="PRO_0000002295" description="Chorismate synthase, chloroplastic">
    <location>
        <begin position="58"/>
        <end position="447"/>
    </location>
</feature>
<feature type="region of interest" description="Disordered" evidence="2">
    <location>
        <begin position="1"/>
        <end position="24"/>
    </location>
</feature>
<comment type="function">
    <text>Catalyzes the last common step of the biosynthesis of aromatic amino acids, produced via the shikimic acid pathway.</text>
</comment>
<comment type="catalytic activity">
    <reaction>
        <text>5-O-(1-carboxyvinyl)-3-phosphoshikimate = chorismate + phosphate</text>
        <dbReference type="Rhea" id="RHEA:21020"/>
        <dbReference type="ChEBI" id="CHEBI:29748"/>
        <dbReference type="ChEBI" id="CHEBI:43474"/>
        <dbReference type="ChEBI" id="CHEBI:57701"/>
        <dbReference type="EC" id="4.2.3.5"/>
    </reaction>
</comment>
<comment type="cofactor">
    <cofactor>
        <name>FMNH2</name>
        <dbReference type="ChEBI" id="CHEBI:57618"/>
    </cofactor>
</comment>
<comment type="pathway">
    <text>Metabolic intermediate biosynthesis; chorismate biosynthesis; chorismate from D-erythrose 4-phosphate and phosphoenolpyruvate: step 7/7.</text>
</comment>
<comment type="subunit">
    <text>Homotetramer.</text>
</comment>
<comment type="subcellular location">
    <subcellularLocation>
        <location>Plastid</location>
        <location>Chloroplast</location>
    </subcellularLocation>
</comment>
<comment type="PTM">
    <text>The N-terminus is blocked.</text>
</comment>
<comment type="similarity">
    <text evidence="3">Belongs to the chorismate synthase family.</text>
</comment>
<proteinExistence type="evidence at protein level"/>
<sequence length="447" mass="48100">MASSLSTKPFLSGSRRRSTTDGSGWSYFQTSDLRQLSNQSVQISVRRQTAPLKLVVQASGSSFGKVFQVTTYGESHGGGVGCVIDGCPPRFPISEADIQSDLDRRRPGQSRITTPRKETDTCKIYSGVADGFTTGSPIHISVPNTDQRGNDYSEMAKAYRPSHADATYDFKYGVRSVQGGGRSSARETIGRVAAGALAKKILKAYAGTEVLAYVSQAHKVVLPEGLVDHETLSLEQIESNIVRCPDSEYAEKMIAAIDAVRVKGDSVGGVVTCIMRNVPRGLGSPVFDKLEAELAKACMSLPATKGFEFGSGFSGTFLTGSEHNDEFYTDENGRIRTRTNRSGGIQGGISNGEIINMRIAFKPTSTIGKKQNTVTREREEIELIARGRHDPCVVPRAVPMVEAMVALVLLDQLMLQHAQGNLFSINPALQEPLSETVSSAAASLQGV</sequence>
<dbReference type="EC" id="4.2.3.5"/>
<dbReference type="EMBL" id="X60544">
    <property type="protein sequence ID" value="CAA43034.1"/>
    <property type="molecule type" value="mRNA"/>
</dbReference>
<dbReference type="PIR" id="A41197">
    <property type="entry name" value="A41197"/>
</dbReference>
<dbReference type="SMR" id="P27793"/>
<dbReference type="BRENDA" id="4.2.3.5">
    <property type="organism ID" value="1634"/>
</dbReference>
<dbReference type="UniPathway" id="UPA00053">
    <property type="reaction ID" value="UER00090"/>
</dbReference>
<dbReference type="GO" id="GO:0009507">
    <property type="term" value="C:chloroplast"/>
    <property type="evidence" value="ECO:0007669"/>
    <property type="project" value="UniProtKB-SubCell"/>
</dbReference>
<dbReference type="GO" id="GO:0005829">
    <property type="term" value="C:cytosol"/>
    <property type="evidence" value="ECO:0007669"/>
    <property type="project" value="TreeGrafter"/>
</dbReference>
<dbReference type="GO" id="GO:0004107">
    <property type="term" value="F:chorismate synthase activity"/>
    <property type="evidence" value="ECO:0007669"/>
    <property type="project" value="UniProtKB-EC"/>
</dbReference>
<dbReference type="GO" id="GO:0010181">
    <property type="term" value="F:FMN binding"/>
    <property type="evidence" value="ECO:0007669"/>
    <property type="project" value="TreeGrafter"/>
</dbReference>
<dbReference type="GO" id="GO:0008652">
    <property type="term" value="P:amino acid biosynthetic process"/>
    <property type="evidence" value="ECO:0007669"/>
    <property type="project" value="UniProtKB-KW"/>
</dbReference>
<dbReference type="GO" id="GO:0009073">
    <property type="term" value="P:aromatic amino acid family biosynthetic process"/>
    <property type="evidence" value="ECO:0007669"/>
    <property type="project" value="UniProtKB-KW"/>
</dbReference>
<dbReference type="GO" id="GO:0009423">
    <property type="term" value="P:chorismate biosynthetic process"/>
    <property type="evidence" value="ECO:0007669"/>
    <property type="project" value="UniProtKB-UniPathway"/>
</dbReference>
<dbReference type="CDD" id="cd07304">
    <property type="entry name" value="Chorismate_synthase"/>
    <property type="match status" value="1"/>
</dbReference>
<dbReference type="FunFam" id="3.60.150.10:FF:000003">
    <property type="entry name" value="Chorismate synthase"/>
    <property type="match status" value="1"/>
</dbReference>
<dbReference type="Gene3D" id="3.60.150.10">
    <property type="entry name" value="Chorismate synthase AroC"/>
    <property type="match status" value="1"/>
</dbReference>
<dbReference type="HAMAP" id="MF_00300">
    <property type="entry name" value="Chorismate_synth"/>
    <property type="match status" value="1"/>
</dbReference>
<dbReference type="InterPro" id="IPR000453">
    <property type="entry name" value="Chorismate_synth"/>
</dbReference>
<dbReference type="InterPro" id="IPR035904">
    <property type="entry name" value="Chorismate_synth_AroC_sf"/>
</dbReference>
<dbReference type="InterPro" id="IPR020541">
    <property type="entry name" value="Chorismate_synthase_CS"/>
</dbReference>
<dbReference type="NCBIfam" id="TIGR00033">
    <property type="entry name" value="aroC"/>
    <property type="match status" value="1"/>
</dbReference>
<dbReference type="NCBIfam" id="NF003793">
    <property type="entry name" value="PRK05382.1"/>
    <property type="match status" value="1"/>
</dbReference>
<dbReference type="PANTHER" id="PTHR21085">
    <property type="entry name" value="CHORISMATE SYNTHASE"/>
    <property type="match status" value="1"/>
</dbReference>
<dbReference type="PANTHER" id="PTHR21085:SF0">
    <property type="entry name" value="CHORISMATE SYNTHASE"/>
    <property type="match status" value="1"/>
</dbReference>
<dbReference type="Pfam" id="PF01264">
    <property type="entry name" value="Chorismate_synt"/>
    <property type="match status" value="1"/>
</dbReference>
<dbReference type="SUPFAM" id="SSF103263">
    <property type="entry name" value="Chorismate synthase, AroC"/>
    <property type="match status" value="1"/>
</dbReference>
<dbReference type="PROSITE" id="PS00787">
    <property type="entry name" value="CHORISMATE_SYNTHASE_1"/>
    <property type="match status" value="1"/>
</dbReference>
<dbReference type="PROSITE" id="PS00788">
    <property type="entry name" value="CHORISMATE_SYNTHASE_2"/>
    <property type="match status" value="1"/>
</dbReference>
<dbReference type="PROSITE" id="PS00789">
    <property type="entry name" value="CHORISMATE_SYNTHASE_3"/>
    <property type="match status" value="1"/>
</dbReference>
<accession>P27793</accession>
<organism>
    <name type="scientific">Capnoides sempervirens</name>
    <name type="common">Rock-harlequin</name>
    <name type="synonym">Corydalis sempervirens</name>
    <dbReference type="NCBI Taxonomy" id="3464"/>
    <lineage>
        <taxon>Eukaryota</taxon>
        <taxon>Viridiplantae</taxon>
        <taxon>Streptophyta</taxon>
        <taxon>Embryophyta</taxon>
        <taxon>Tracheophyta</taxon>
        <taxon>Spermatophyta</taxon>
        <taxon>Magnoliopsida</taxon>
        <taxon>Ranunculales</taxon>
        <taxon>Papaveraceae</taxon>
        <taxon>Fumarioideae</taxon>
        <taxon>Capnoides</taxon>
    </lineage>
</organism>
<reference key="1">
    <citation type="journal article" date="1991" name="J. Biol. Chem.">
        <title>Molecular cloning and analysis of a cDNA coding for chorismate synthase from the higher plant Corydalis sempervirens Pers.</title>
        <authorList>
            <person name="Schaller A."/>
            <person name="Schmid J."/>
            <person name="Leibinger U."/>
            <person name="Amrhein N."/>
        </authorList>
    </citation>
    <scope>NUCLEOTIDE SEQUENCE [MRNA]</scope>
    <scope>PROTEIN SEQUENCE OF 267-276 AND 307-320</scope>
</reference>
<reference key="2">
    <citation type="journal article" date="1990" name="Arch. Biochem. Biophys.">
        <title>Purification of chorismate synthase from a cell culture of the higher plant Corydalis sempervirens Pers.</title>
        <authorList>
            <person name="Schaller A."/>
            <person name="Windhofer V."/>
            <person name="Amrhein N."/>
        </authorList>
    </citation>
    <scope>PROTEIN SEQUENCE OF 306-320</scope>
</reference>
<evidence type="ECO:0000255" key="1"/>
<evidence type="ECO:0000256" key="2">
    <source>
        <dbReference type="SAM" id="MobiDB-lite"/>
    </source>
</evidence>
<evidence type="ECO:0000305" key="3"/>
<keyword id="KW-0028">Amino-acid biosynthesis</keyword>
<keyword id="KW-0057">Aromatic amino acid biosynthesis</keyword>
<keyword id="KW-0150">Chloroplast</keyword>
<keyword id="KW-0903">Direct protein sequencing</keyword>
<keyword id="KW-0456">Lyase</keyword>
<keyword id="KW-0934">Plastid</keyword>
<keyword id="KW-0809">Transit peptide</keyword>
<protein>
    <recommendedName>
        <fullName>Chorismate synthase, chloroplastic</fullName>
        <ecNumber>4.2.3.5</ecNumber>
    </recommendedName>
    <alternativeName>
        <fullName>5-enolpyruvylshikimate-3-phosphate phospholyase</fullName>
    </alternativeName>
</protein>